<gene>
    <name evidence="1" type="primary">bchN</name>
    <name type="ordered locus">Rsph17029_1928</name>
</gene>
<keyword id="KW-0004">4Fe-4S</keyword>
<keyword id="KW-0067">ATP-binding</keyword>
<keyword id="KW-0077">Bacteriochlorophyll biosynthesis</keyword>
<keyword id="KW-0149">Chlorophyll biosynthesis</keyword>
<keyword id="KW-0408">Iron</keyword>
<keyword id="KW-0411">Iron-sulfur</keyword>
<keyword id="KW-0479">Metal-binding</keyword>
<keyword id="KW-0547">Nucleotide-binding</keyword>
<keyword id="KW-0560">Oxidoreductase</keyword>
<keyword id="KW-0602">Photosynthesis</keyword>
<evidence type="ECO:0000255" key="1">
    <source>
        <dbReference type="HAMAP-Rule" id="MF_00352"/>
    </source>
</evidence>
<feature type="chain" id="PRO_1000048395" description="Light-independent protochlorophyllide reductase subunit N">
    <location>
        <begin position="1"/>
        <end position="428"/>
    </location>
</feature>
<feature type="binding site" evidence="1">
    <location>
        <position position="29"/>
    </location>
    <ligand>
        <name>[4Fe-4S] cluster</name>
        <dbReference type="ChEBI" id="CHEBI:49883"/>
        <note>ligand shared with heterodimeric partner</note>
    </ligand>
</feature>
<feature type="binding site" evidence="1">
    <location>
        <position position="54"/>
    </location>
    <ligand>
        <name>[4Fe-4S] cluster</name>
        <dbReference type="ChEBI" id="CHEBI:49883"/>
        <note>ligand shared with heterodimeric partner</note>
    </ligand>
</feature>
<feature type="binding site" evidence="1">
    <location>
        <position position="115"/>
    </location>
    <ligand>
        <name>[4Fe-4S] cluster</name>
        <dbReference type="ChEBI" id="CHEBI:49883"/>
        <note>ligand shared with heterodimeric partner</note>
    </ligand>
</feature>
<proteinExistence type="inferred from homology"/>
<accession>A3PL16</accession>
<protein>
    <recommendedName>
        <fullName evidence="1">Light-independent protochlorophyllide reductase subunit N</fullName>
        <shortName evidence="1">DPOR subunit N</shortName>
        <shortName evidence="1">LI-POR subunit N</shortName>
        <ecNumber evidence="1">1.3.7.7</ecNumber>
    </recommendedName>
</protein>
<comment type="function">
    <text evidence="1">Component of the dark-operative protochlorophyllide reductase (DPOR) that uses Mg-ATP and reduced ferredoxin to reduce ring D of protochlorophyllide (Pchlide) to form chlorophyllide a (Chlide). This reaction is light-independent. The NB-protein (BchN-BchB) is the catalytic component of the complex.</text>
</comment>
<comment type="catalytic activity">
    <reaction evidence="1">
        <text>chlorophyllide a + oxidized 2[4Fe-4S]-[ferredoxin] + 2 ADP + 2 phosphate = protochlorophyllide a + reduced 2[4Fe-4S]-[ferredoxin] + 2 ATP + 2 H2O</text>
        <dbReference type="Rhea" id="RHEA:28202"/>
        <dbReference type="Rhea" id="RHEA-COMP:10002"/>
        <dbReference type="Rhea" id="RHEA-COMP:10004"/>
        <dbReference type="ChEBI" id="CHEBI:15377"/>
        <dbReference type="ChEBI" id="CHEBI:30616"/>
        <dbReference type="ChEBI" id="CHEBI:33722"/>
        <dbReference type="ChEBI" id="CHEBI:33723"/>
        <dbReference type="ChEBI" id="CHEBI:43474"/>
        <dbReference type="ChEBI" id="CHEBI:83348"/>
        <dbReference type="ChEBI" id="CHEBI:83350"/>
        <dbReference type="ChEBI" id="CHEBI:456216"/>
        <dbReference type="EC" id="1.3.7.7"/>
    </reaction>
</comment>
<comment type="cofactor">
    <cofactor evidence="1">
        <name>[4Fe-4S] cluster</name>
        <dbReference type="ChEBI" id="CHEBI:49883"/>
    </cofactor>
    <text evidence="1">Binds 1 [4Fe-4S] cluster per heterodimer. The cluster is bound at the heterodimer interface by residues from both subunits.</text>
</comment>
<comment type="pathway">
    <text evidence="1">Porphyrin-containing compound metabolism; bacteriochlorophyll biosynthesis (light-independent).</text>
</comment>
<comment type="subunit">
    <text evidence="1">Protochlorophyllide reductase is composed of three subunits; BchL, BchN and BchB. Forms a heterotetramer of two BchB and two BchN subunits.</text>
</comment>
<comment type="similarity">
    <text evidence="1">Belongs to the BchN/ChlN family.</text>
</comment>
<name>BCHN_CERS1</name>
<organism>
    <name type="scientific">Cereibacter sphaeroides (strain ATCC 17029 / ATH 2.4.9)</name>
    <name type="common">Rhodobacter sphaeroides</name>
    <dbReference type="NCBI Taxonomy" id="349101"/>
    <lineage>
        <taxon>Bacteria</taxon>
        <taxon>Pseudomonadati</taxon>
        <taxon>Pseudomonadota</taxon>
        <taxon>Alphaproteobacteria</taxon>
        <taxon>Rhodobacterales</taxon>
        <taxon>Paracoccaceae</taxon>
        <taxon>Cereibacter</taxon>
    </lineage>
</organism>
<dbReference type="EC" id="1.3.7.7" evidence="1"/>
<dbReference type="EMBL" id="CP000577">
    <property type="protein sequence ID" value="ABN77032.1"/>
    <property type="molecule type" value="Genomic_DNA"/>
</dbReference>
<dbReference type="RefSeq" id="WP_011841328.1">
    <property type="nucleotide sequence ID" value="NC_009049.1"/>
</dbReference>
<dbReference type="SMR" id="A3PL16"/>
<dbReference type="KEGG" id="rsh:Rsph17029_1928"/>
<dbReference type="HOGENOM" id="CLU_037170_0_0_5"/>
<dbReference type="UniPathway" id="UPA00671"/>
<dbReference type="GO" id="GO:0051539">
    <property type="term" value="F:4 iron, 4 sulfur cluster binding"/>
    <property type="evidence" value="ECO:0007669"/>
    <property type="project" value="UniProtKB-UniRule"/>
</dbReference>
<dbReference type="GO" id="GO:0005524">
    <property type="term" value="F:ATP binding"/>
    <property type="evidence" value="ECO:0007669"/>
    <property type="project" value="UniProtKB-UniRule"/>
</dbReference>
<dbReference type="GO" id="GO:0046872">
    <property type="term" value="F:metal ion binding"/>
    <property type="evidence" value="ECO:0007669"/>
    <property type="project" value="UniProtKB-KW"/>
</dbReference>
<dbReference type="GO" id="GO:0016730">
    <property type="term" value="F:oxidoreductase activity, acting on iron-sulfur proteins as donors"/>
    <property type="evidence" value="ECO:0007669"/>
    <property type="project" value="InterPro"/>
</dbReference>
<dbReference type="GO" id="GO:0016636">
    <property type="term" value="F:oxidoreductase activity, acting on the CH-CH group of donors, iron-sulfur protein as acceptor"/>
    <property type="evidence" value="ECO:0007669"/>
    <property type="project" value="UniProtKB-UniRule"/>
</dbReference>
<dbReference type="GO" id="GO:0036070">
    <property type="term" value="P:light-independent bacteriochlorophyll biosynthetic process"/>
    <property type="evidence" value="ECO:0007669"/>
    <property type="project" value="UniProtKB-UniRule"/>
</dbReference>
<dbReference type="GO" id="GO:0019685">
    <property type="term" value="P:photosynthesis, dark reaction"/>
    <property type="evidence" value="ECO:0007669"/>
    <property type="project" value="InterPro"/>
</dbReference>
<dbReference type="Gene3D" id="3.40.50.1980">
    <property type="entry name" value="Nitrogenase molybdenum iron protein domain"/>
    <property type="match status" value="3"/>
</dbReference>
<dbReference type="HAMAP" id="MF_00352">
    <property type="entry name" value="ChlN_BchN"/>
    <property type="match status" value="1"/>
</dbReference>
<dbReference type="InterPro" id="IPR050293">
    <property type="entry name" value="LIPOR_BchN/ChlN"/>
</dbReference>
<dbReference type="InterPro" id="IPR000510">
    <property type="entry name" value="Nase/OxRdtase_comp1"/>
</dbReference>
<dbReference type="InterPro" id="IPR005970">
    <property type="entry name" value="Protochl_reductN"/>
</dbReference>
<dbReference type="NCBIfam" id="TIGR01279">
    <property type="entry name" value="DPOR_bchN"/>
    <property type="match status" value="1"/>
</dbReference>
<dbReference type="NCBIfam" id="NF002768">
    <property type="entry name" value="PRK02842.1"/>
    <property type="match status" value="1"/>
</dbReference>
<dbReference type="PANTHER" id="PTHR39429">
    <property type="entry name" value="LIGHT-INDEPENDENT PROTOCHLOROPHYLLIDE REDUCTASE SUBUNIT N"/>
    <property type="match status" value="1"/>
</dbReference>
<dbReference type="PANTHER" id="PTHR39429:SF3">
    <property type="entry name" value="LIGHT-INDEPENDENT PROTOCHLOROPHYLLIDE REDUCTASE SUBUNIT N"/>
    <property type="match status" value="1"/>
</dbReference>
<dbReference type="Pfam" id="PF00148">
    <property type="entry name" value="Oxidored_nitro"/>
    <property type="match status" value="1"/>
</dbReference>
<dbReference type="PIRSF" id="PIRSF000162">
    <property type="entry name" value="P_chlorophyll_rd"/>
    <property type="match status" value="1"/>
</dbReference>
<dbReference type="SUPFAM" id="SSF53807">
    <property type="entry name" value="Helical backbone' metal receptor"/>
    <property type="match status" value="1"/>
</dbReference>
<reference key="1">
    <citation type="submission" date="2007-02" db="EMBL/GenBank/DDBJ databases">
        <title>Complete sequence of chromosome 1 of Rhodobacter sphaeroides ATCC 17029.</title>
        <authorList>
            <person name="Copeland A."/>
            <person name="Lucas S."/>
            <person name="Lapidus A."/>
            <person name="Barry K."/>
            <person name="Detter J.C."/>
            <person name="Glavina del Rio T."/>
            <person name="Hammon N."/>
            <person name="Israni S."/>
            <person name="Dalin E."/>
            <person name="Tice H."/>
            <person name="Pitluck S."/>
            <person name="Kiss H."/>
            <person name="Brettin T."/>
            <person name="Bruce D."/>
            <person name="Han C."/>
            <person name="Tapia R."/>
            <person name="Gilna P."/>
            <person name="Schmutz J."/>
            <person name="Larimer F."/>
            <person name="Land M."/>
            <person name="Hauser L."/>
            <person name="Kyrpides N."/>
            <person name="Mikhailova N."/>
            <person name="Richardson P."/>
            <person name="Mackenzie C."/>
            <person name="Choudhary M."/>
            <person name="Donohue T.J."/>
            <person name="Kaplan S."/>
        </authorList>
    </citation>
    <scope>NUCLEOTIDE SEQUENCE [LARGE SCALE GENOMIC DNA]</scope>
    <source>
        <strain>ATCC 17029 / ATH 2.4.9</strain>
    </source>
</reference>
<sequence length="428" mass="46141">MSLDLPPPPARGCRSTEVLKERGQREVFCGLTGIIWLHRKMQDAFFLVVGSRTCAHLLQSAAGVMIFAEPRFGTAVLEEKDLAGLADANAELDREVDRLLARRPDIRQLFLVGSCPSEVIKLDLHRAAERLSAHHGPAVRVYNFSGSGIETTFTQGEDACLASIVPTLPATEARELLLVGALPDVVEDQAVSLLTQLGIGPVRCLPAHHAAEAPGVGPNTVFALVQPFLGDTHGALTRRGARHIAAPFPFGHEGTTLWLKAIADEFGVSAETFEAVTAAPRARARKAVAAASEGLRGKSVFFLPDSQLEPSLARFLTRECGMSAVEVGTPFLHRGILGPDLDLIAEGPVLSEGQDVERQLDRVRAARPDLTVCGLGLANPLEAEGFTTKWAIELVFTPVHFYEQAGDLAGLFSRPVRRRAILRREAAE</sequence>